<dbReference type="EC" id="6.3.1.1" evidence="1"/>
<dbReference type="EMBL" id="CP000038">
    <property type="protein sequence ID" value="AAZ90414.1"/>
    <property type="molecule type" value="Genomic_DNA"/>
</dbReference>
<dbReference type="RefSeq" id="WP_000845106.1">
    <property type="nucleotide sequence ID" value="NC_007384.1"/>
</dbReference>
<dbReference type="SMR" id="Q3YVP8"/>
<dbReference type="GeneID" id="93778223"/>
<dbReference type="KEGG" id="ssn:SSON_3875"/>
<dbReference type="HOGENOM" id="CLU_071543_0_0_6"/>
<dbReference type="UniPathway" id="UPA00134">
    <property type="reaction ID" value="UER00194"/>
</dbReference>
<dbReference type="Proteomes" id="UP000002529">
    <property type="component" value="Chromosome"/>
</dbReference>
<dbReference type="GO" id="GO:0005829">
    <property type="term" value="C:cytosol"/>
    <property type="evidence" value="ECO:0007669"/>
    <property type="project" value="TreeGrafter"/>
</dbReference>
<dbReference type="GO" id="GO:0004071">
    <property type="term" value="F:aspartate-ammonia ligase activity"/>
    <property type="evidence" value="ECO:0007669"/>
    <property type="project" value="UniProtKB-UniRule"/>
</dbReference>
<dbReference type="GO" id="GO:0005524">
    <property type="term" value="F:ATP binding"/>
    <property type="evidence" value="ECO:0007669"/>
    <property type="project" value="UniProtKB-UniRule"/>
</dbReference>
<dbReference type="GO" id="GO:0070981">
    <property type="term" value="P:L-asparagine biosynthetic process"/>
    <property type="evidence" value="ECO:0007669"/>
    <property type="project" value="UniProtKB-UniRule"/>
</dbReference>
<dbReference type="CDD" id="cd00645">
    <property type="entry name" value="AsnA"/>
    <property type="match status" value="1"/>
</dbReference>
<dbReference type="FunFam" id="3.30.930.10:FF:000025">
    <property type="entry name" value="Aspartate--ammonia ligase"/>
    <property type="match status" value="1"/>
</dbReference>
<dbReference type="Gene3D" id="3.30.930.10">
    <property type="entry name" value="Bira Bifunctional Protein, Domain 2"/>
    <property type="match status" value="1"/>
</dbReference>
<dbReference type="HAMAP" id="MF_00555">
    <property type="entry name" value="AsnA"/>
    <property type="match status" value="1"/>
</dbReference>
<dbReference type="InterPro" id="IPR006195">
    <property type="entry name" value="aa-tRNA-synth_II"/>
</dbReference>
<dbReference type="InterPro" id="IPR045864">
    <property type="entry name" value="aa-tRNA-synth_II/BPL/LPL"/>
</dbReference>
<dbReference type="InterPro" id="IPR004618">
    <property type="entry name" value="AsnA"/>
</dbReference>
<dbReference type="NCBIfam" id="TIGR00669">
    <property type="entry name" value="asnA"/>
    <property type="match status" value="1"/>
</dbReference>
<dbReference type="PANTHER" id="PTHR30073">
    <property type="entry name" value="ASPARTATE--AMMONIA LIGASE"/>
    <property type="match status" value="1"/>
</dbReference>
<dbReference type="PANTHER" id="PTHR30073:SF5">
    <property type="entry name" value="ASPARTATE--AMMONIA LIGASE"/>
    <property type="match status" value="1"/>
</dbReference>
<dbReference type="Pfam" id="PF03590">
    <property type="entry name" value="AsnA"/>
    <property type="match status" value="1"/>
</dbReference>
<dbReference type="PIRSF" id="PIRSF001555">
    <property type="entry name" value="Asp_ammon_ligase"/>
    <property type="match status" value="1"/>
</dbReference>
<dbReference type="SUPFAM" id="SSF55681">
    <property type="entry name" value="Class II aaRS and biotin synthetases"/>
    <property type="match status" value="1"/>
</dbReference>
<dbReference type="PROSITE" id="PS50862">
    <property type="entry name" value="AA_TRNA_LIGASE_II"/>
    <property type="match status" value="1"/>
</dbReference>
<gene>
    <name evidence="1" type="primary">asnA</name>
    <name type="ordered locus">SSON_3875</name>
</gene>
<organism>
    <name type="scientific">Shigella sonnei (strain Ss046)</name>
    <dbReference type="NCBI Taxonomy" id="300269"/>
    <lineage>
        <taxon>Bacteria</taxon>
        <taxon>Pseudomonadati</taxon>
        <taxon>Pseudomonadota</taxon>
        <taxon>Gammaproteobacteria</taxon>
        <taxon>Enterobacterales</taxon>
        <taxon>Enterobacteriaceae</taxon>
        <taxon>Shigella</taxon>
    </lineage>
</organism>
<accession>Q3YVP8</accession>
<reference key="1">
    <citation type="journal article" date="2005" name="Nucleic Acids Res.">
        <title>Genome dynamics and diversity of Shigella species, the etiologic agents of bacillary dysentery.</title>
        <authorList>
            <person name="Yang F."/>
            <person name="Yang J."/>
            <person name="Zhang X."/>
            <person name="Chen L."/>
            <person name="Jiang Y."/>
            <person name="Yan Y."/>
            <person name="Tang X."/>
            <person name="Wang J."/>
            <person name="Xiong Z."/>
            <person name="Dong J."/>
            <person name="Xue Y."/>
            <person name="Zhu Y."/>
            <person name="Xu X."/>
            <person name="Sun L."/>
            <person name="Chen S."/>
            <person name="Nie H."/>
            <person name="Peng J."/>
            <person name="Xu J."/>
            <person name="Wang Y."/>
            <person name="Yuan Z."/>
            <person name="Wen Y."/>
            <person name="Yao Z."/>
            <person name="Shen Y."/>
            <person name="Qiang B."/>
            <person name="Hou Y."/>
            <person name="Yu J."/>
            <person name="Jin Q."/>
        </authorList>
    </citation>
    <scope>NUCLEOTIDE SEQUENCE [LARGE SCALE GENOMIC DNA]</scope>
    <source>
        <strain>Ss046</strain>
    </source>
</reference>
<comment type="catalytic activity">
    <reaction evidence="1">
        <text>L-aspartate + NH4(+) + ATP = L-asparagine + AMP + diphosphate + H(+)</text>
        <dbReference type="Rhea" id="RHEA:11372"/>
        <dbReference type="ChEBI" id="CHEBI:15378"/>
        <dbReference type="ChEBI" id="CHEBI:28938"/>
        <dbReference type="ChEBI" id="CHEBI:29991"/>
        <dbReference type="ChEBI" id="CHEBI:30616"/>
        <dbReference type="ChEBI" id="CHEBI:33019"/>
        <dbReference type="ChEBI" id="CHEBI:58048"/>
        <dbReference type="ChEBI" id="CHEBI:456215"/>
        <dbReference type="EC" id="6.3.1.1"/>
    </reaction>
</comment>
<comment type="pathway">
    <text evidence="1">Amino-acid biosynthesis; L-asparagine biosynthesis; L-asparagine from L-aspartate (ammonia route): step 1/1.</text>
</comment>
<comment type="subcellular location">
    <subcellularLocation>
        <location evidence="1">Cytoplasm</location>
    </subcellularLocation>
</comment>
<comment type="similarity">
    <text evidence="1">Belongs to the class-II aminoacyl-tRNA synthetase family. AsnA subfamily.</text>
</comment>
<sequence>MKTAYIAKQRQISFVKSHFSRQLEERLGLIEVQAPILSRVGDGTQDNLSGCEKAVQVKVKALPDAQFEVVHSLAKWKRQTLGQHDFSAGEGLYTHMKALRPDEDRLSPLHSVYVDQWDWERVMGDGERQFSTLKSTVEAIWAGIKATEAAVSEEFGLAPFLPDQIHFVHSQELLSRYPDLDAKGRERAIAKDLGAVFLVGIGGKLSDGHRHDVRAPDYDDWSTPSELGHAGLNGDILVWNPVLEDAFELSSMGIRVDADTLKHQLALTGDEDRLQLEWHQALLRGEMPQTIGGGIGQSRLTMLLLQLPHIGQVQCGVWPAAVRENVPSLL</sequence>
<protein>
    <recommendedName>
        <fullName evidence="1">Aspartate--ammonia ligase</fullName>
        <ecNumber evidence="1">6.3.1.1</ecNumber>
    </recommendedName>
    <alternativeName>
        <fullName evidence="1">Asparagine synthetase A</fullName>
    </alternativeName>
</protein>
<evidence type="ECO:0000255" key="1">
    <source>
        <dbReference type="HAMAP-Rule" id="MF_00555"/>
    </source>
</evidence>
<name>ASNA_SHISS</name>
<feature type="chain" id="PRO_1000017962" description="Aspartate--ammonia ligase">
    <location>
        <begin position="1"/>
        <end position="330"/>
    </location>
</feature>
<proteinExistence type="inferred from homology"/>
<keyword id="KW-0028">Amino-acid biosynthesis</keyword>
<keyword id="KW-0061">Asparagine biosynthesis</keyword>
<keyword id="KW-0067">ATP-binding</keyword>
<keyword id="KW-0963">Cytoplasm</keyword>
<keyword id="KW-0436">Ligase</keyword>
<keyword id="KW-0547">Nucleotide-binding</keyword>
<keyword id="KW-1185">Reference proteome</keyword>